<feature type="signal peptide" evidence="2">
    <location>
        <begin position="1"/>
        <end position="15"/>
    </location>
</feature>
<feature type="chain" id="PRO_0000039103" description="Hemagglutinin HA1 chain" evidence="1">
    <location>
        <begin position="16"/>
        <end position="360"/>
    </location>
</feature>
<feature type="glycosylation site" description="N-linked (GlcNAc...) asparagine; by host" evidence="2">
    <location>
        <position position="40"/>
    </location>
</feature>
<feature type="glycosylation site" description="N-linked (GlcNAc...) asparagine; by host" evidence="2">
    <location>
        <position position="74"/>
    </location>
</feature>
<feature type="glycosylation site" description="N-linked (GlcNAc...) asparagine; by host" evidence="2">
    <location>
        <position position="160"/>
    </location>
</feature>
<feature type="glycosylation site" description="N-linked (GlcNAc...) asparagine; by host" evidence="2">
    <location>
        <position position="179"/>
    </location>
</feature>
<feature type="glycosylation site" description="N-linked (GlcNAc...) asparagine; by host" evidence="2">
    <location>
        <position position="246"/>
    </location>
</feature>
<feature type="glycosylation site" description="N-linked (GlcNAc...) asparagine; by host" evidence="2">
    <location>
        <position position="317"/>
    </location>
</feature>
<feature type="glycosylation site" description="N-linked (GlcNAc...) asparagine; by host" evidence="2">
    <location>
        <position position="346"/>
    </location>
</feature>
<feature type="non-terminal residue">
    <location>
        <position position="360"/>
    </location>
</feature>
<name>HEMA_INBGD</name>
<sequence>MKAIIVLLMVVTSNADRICTGITSSNSPHVVKTATQGEVNVTGVIPLTTTPTKSHFANLKGTKTRGKLCPNCLNCTDLDVALARPMCMGIIPSAKASILHEVRPVTSGCFPIMHDRTKIRQLPNLLRGYENIRLSTHNVINAERAPGGPYRLGTSGSCPNVTSRSGFFATMAWAVPRDNKTATNPLTVEVPYICTKGEDQITVWGFHSDKKTQMKNLYGDSNPQKFTSSANGVTTHYVSQIGDFPNQTEDGGLPQSGRIVVDYMVQKPGKTGTIVYQRGVLLPQKVWCASGRSKVIKGSLPLIGEADCLHAKYGGLNKSKPYYTGEHAKAIGNCPIWVKTPLKLANGTKYRPPAKLLKER</sequence>
<gene>
    <name type="primary">HA</name>
</gene>
<keyword id="KW-1015">Disulfide bond</keyword>
<keyword id="KW-1170">Fusion of virus membrane with host endosomal membrane</keyword>
<keyword id="KW-1168">Fusion of virus membrane with host membrane</keyword>
<keyword id="KW-0325">Glycoprotein</keyword>
<keyword id="KW-0348">Hemagglutinin</keyword>
<keyword id="KW-1032">Host cell membrane</keyword>
<keyword id="KW-1043">Host membrane</keyword>
<keyword id="KW-0945">Host-virus interaction</keyword>
<keyword id="KW-0449">Lipoprotein</keyword>
<keyword id="KW-0472">Membrane</keyword>
<keyword id="KW-0564">Palmitate</keyword>
<keyword id="KW-0732">Signal</keyword>
<keyword id="KW-0812">Transmembrane</keyword>
<keyword id="KW-1161">Viral attachment to host cell</keyword>
<keyword id="KW-0261">Viral envelope protein</keyword>
<keyword id="KW-1162">Viral penetration into host cytoplasm</keyword>
<keyword id="KW-0946">Virion</keyword>
<keyword id="KW-1160">Virus entry into host cell</keyword>
<dbReference type="EMBL" id="M65166">
    <property type="protein sequence ID" value="AAA43704.1"/>
    <property type="molecule type" value="Genomic_RNA"/>
</dbReference>
<dbReference type="PIR" id="JQ1906">
    <property type="entry name" value="JQ1906"/>
</dbReference>
<dbReference type="PIR" id="JQ1907">
    <property type="entry name" value="JQ1907"/>
</dbReference>
<dbReference type="SMR" id="Q67370"/>
<dbReference type="GlyCosmos" id="Q67370">
    <property type="glycosylation" value="7 sites, No reported glycans"/>
</dbReference>
<dbReference type="GO" id="GO:0020002">
    <property type="term" value="C:host cell plasma membrane"/>
    <property type="evidence" value="ECO:0007669"/>
    <property type="project" value="UniProtKB-SubCell"/>
</dbReference>
<dbReference type="GO" id="GO:0016020">
    <property type="term" value="C:membrane"/>
    <property type="evidence" value="ECO:0007669"/>
    <property type="project" value="UniProtKB-KW"/>
</dbReference>
<dbReference type="GO" id="GO:0019031">
    <property type="term" value="C:viral envelope"/>
    <property type="evidence" value="ECO:0007669"/>
    <property type="project" value="UniProtKB-KW"/>
</dbReference>
<dbReference type="GO" id="GO:0055036">
    <property type="term" value="C:virion membrane"/>
    <property type="evidence" value="ECO:0007669"/>
    <property type="project" value="UniProtKB-SubCell"/>
</dbReference>
<dbReference type="GO" id="GO:0046789">
    <property type="term" value="F:host cell surface receptor binding"/>
    <property type="evidence" value="ECO:0007669"/>
    <property type="project" value="InterPro"/>
</dbReference>
<dbReference type="GO" id="GO:0039654">
    <property type="term" value="P:fusion of virus membrane with host endosome membrane"/>
    <property type="evidence" value="ECO:0007669"/>
    <property type="project" value="UniProtKB-KW"/>
</dbReference>
<dbReference type="GO" id="GO:0019064">
    <property type="term" value="P:fusion of virus membrane with host plasma membrane"/>
    <property type="evidence" value="ECO:0007669"/>
    <property type="project" value="InterPro"/>
</dbReference>
<dbReference type="GO" id="GO:0046718">
    <property type="term" value="P:symbiont entry into host cell"/>
    <property type="evidence" value="ECO:0007669"/>
    <property type="project" value="UniProtKB-KW"/>
</dbReference>
<dbReference type="GO" id="GO:0019062">
    <property type="term" value="P:virion attachment to host cell"/>
    <property type="evidence" value="ECO:0007669"/>
    <property type="project" value="UniProtKB-KW"/>
</dbReference>
<dbReference type="Gene3D" id="3.90.209.20">
    <property type="match status" value="1"/>
</dbReference>
<dbReference type="Gene3D" id="2.10.77.10">
    <property type="entry name" value="Hemagglutinin Chain A, Domain 2"/>
    <property type="match status" value="1"/>
</dbReference>
<dbReference type="InterPro" id="IPR008980">
    <property type="entry name" value="Capsid_hemagglutn"/>
</dbReference>
<dbReference type="InterPro" id="IPR013828">
    <property type="entry name" value="Hemagglutn_HA1_a/b_dom_sf"/>
</dbReference>
<dbReference type="InterPro" id="IPR001364">
    <property type="entry name" value="Hemagglutn_influenz_A/B"/>
</dbReference>
<dbReference type="Pfam" id="PF00509">
    <property type="entry name" value="Hemagglutinin"/>
    <property type="match status" value="1"/>
</dbReference>
<dbReference type="SUPFAM" id="SSF49818">
    <property type="entry name" value="Viral protein domain"/>
    <property type="match status" value="1"/>
</dbReference>
<protein>
    <recommendedName>
        <fullName>Hemagglutinin</fullName>
    </recommendedName>
    <component>
        <recommendedName>
            <fullName>Hemagglutinin HA1 chain</fullName>
        </recommendedName>
    </component>
</protein>
<organism>
    <name type="scientific">Influenza B virus (strain B/Guangdong/55/1989)</name>
    <dbReference type="NCBI Taxonomy" id="291802"/>
    <lineage>
        <taxon>Viruses</taxon>
        <taxon>Riboviria</taxon>
        <taxon>Orthornavirae</taxon>
        <taxon>Negarnaviricota</taxon>
        <taxon>Polyploviricotina</taxon>
        <taxon>Insthoviricetes</taxon>
        <taxon>Articulavirales</taxon>
        <taxon>Orthomyxoviridae</taxon>
        <taxon>Betainfluenzavirus</taxon>
        <taxon>Betainfluenzavirus influenzae</taxon>
        <taxon>Influenza B virus</taxon>
    </lineage>
</organism>
<comment type="function">
    <text>Binds to sialic acid-containing receptors on the cell surface, bringing about the attachment of the virus particle to the cell. Plays a major role in the determination of host range restriction and virulence. Class I viral fusion protein. Responsible for penetration of the virus into the cell cytoplasm by mediating the fusion of the membrane of the endocytosed virus particle with the endosomal membrane. Low pH in endosomes induce an irreversible conformational change in HA2, releasing the fusion hydrophobic peptide. Several trimers are required to form a competent fusion pore.</text>
</comment>
<comment type="subunit">
    <text>Homotrimer of disulfide-linked HA1-HA2.</text>
</comment>
<comment type="subcellular location">
    <subcellularLocation>
        <location evidence="3">Virion membrane</location>
        <topology evidence="3">Single-pass type I membrane protein</topology>
    </subcellularLocation>
    <subcellularLocation>
        <location>Host apical cell membrane</location>
        <topology>Single-pass type I membrane protein</topology>
    </subcellularLocation>
    <text>Targeted to the apical plasma membrane in epithelial polarized cells through a signal present in the transmembrane domain. Associated with glycosphingolipid- and cholesterol-enriched detergent-resistant lipid rafts.</text>
</comment>
<comment type="PTM">
    <text evidence="1">In natural infection, inactive HA is matured into HA1 and HA2 outside the cell by one or more trypsin-like, arginine-specific endoprotease secreted by the bronchial epithelial cells. One identified protease that may be involved in this process is secreted in lungs by club cells (By similarity).</text>
</comment>
<comment type="PTM">
    <text evidence="1">Palmitoylated.</text>
</comment>
<comment type="miscellaneous">
    <text>Major glycoprotein, comprises over 80% of the envelope proteins present in virus particle.</text>
</comment>
<comment type="miscellaneous">
    <text>The extent of infection into host organism is determined by HA. Influenza viruses bud from the apical surface of polarized epithelial cells (e.g. bronchial epithelial cells) into lumen of lungs and are therefore usually pneumotropic. The reason is that HA is cleaved by tryptase clara which is restricted to lungs. However, HAs of H5 and H7 pantropic avian viruses subtypes can be cleaved by furin and subtilisin-type enzymes, allowing the virus to grow in other organs than lungs.</text>
</comment>
<comment type="miscellaneous">
    <text>The influenza B genome consist of 8 RNA segments. Genetic variation of hemagglutinin and/or neuraminidase genes results in the emergence of new influenza strains. The mechanism of variation can be the result of point mutations or the result of genetic reassortment between segments of two different strains.</text>
</comment>
<comment type="similarity">
    <text evidence="3">Belongs to the influenza viruses hemagglutinin family.</text>
</comment>
<organismHost>
    <name type="scientific">Homo sapiens</name>
    <name type="common">Human</name>
    <dbReference type="NCBI Taxonomy" id="9606"/>
</organismHost>
<proteinExistence type="inferred from homology"/>
<evidence type="ECO:0000250" key="1"/>
<evidence type="ECO:0000255" key="2"/>
<evidence type="ECO:0000305" key="3"/>
<accession>Q67370</accession>
<reference key="1">
    <citation type="journal article" date="1992" name="J. Gen. Virol.">
        <title>Antigenic and genetic characterization of the haemagglutinins of recent cocirculating strains of influenza B virus.</title>
        <authorList>
            <person name="Rota P.A."/>
            <person name="Hemphill M."/>
            <person name="Whistler T."/>
            <person name="Regnery H.L."/>
            <person name="Kendal A.P."/>
        </authorList>
    </citation>
    <scope>NUCLEOTIDE SEQUENCE [GENOMIC RNA]</scope>
</reference>